<name>Y101_MYCGE</name>
<reference key="1">
    <citation type="journal article" date="1995" name="Science">
        <title>The minimal gene complement of Mycoplasma genitalium.</title>
        <authorList>
            <person name="Fraser C.M."/>
            <person name="Gocayne J.D."/>
            <person name="White O."/>
            <person name="Adams M.D."/>
            <person name="Clayton R.A."/>
            <person name="Fleischmann R.D."/>
            <person name="Bult C.J."/>
            <person name="Kerlavage A.R."/>
            <person name="Sutton G.G."/>
            <person name="Kelley J.M."/>
            <person name="Fritchman J.L."/>
            <person name="Weidman J.F."/>
            <person name="Small K.V."/>
            <person name="Sandusky M."/>
            <person name="Fuhrmann J.L."/>
            <person name="Nguyen D.T."/>
            <person name="Utterback T.R."/>
            <person name="Saudek D.M."/>
            <person name="Phillips C.A."/>
            <person name="Merrick J.M."/>
            <person name="Tomb J.-F."/>
            <person name="Dougherty B.A."/>
            <person name="Bott K.F."/>
            <person name="Hu P.-C."/>
            <person name="Lucier T.S."/>
            <person name="Peterson S.N."/>
            <person name="Smith H.O."/>
            <person name="Hutchison C.A. III"/>
            <person name="Venter J.C."/>
        </authorList>
    </citation>
    <scope>NUCLEOTIDE SEQUENCE [LARGE SCALE GENOMIC DNA]</scope>
    <source>
        <strain>ATCC 33530 / DSM 19775 / NCTC 10195 / G37</strain>
    </source>
</reference>
<reference key="2">
    <citation type="journal article" date="1993" name="J. Bacteriol.">
        <title>A survey of the Mycoplasma genitalium genome by using random sequencing.</title>
        <authorList>
            <person name="Peterson S.N."/>
            <person name="Hu P.-C."/>
            <person name="Bott K.F."/>
            <person name="Hutchison C.A. III"/>
        </authorList>
    </citation>
    <scope>NUCLEOTIDE SEQUENCE [GENOMIC DNA] OF 27-132</scope>
    <source>
        <strain>ATCC 33530 / DSM 19775 / NCTC 10195 / G37</strain>
    </source>
</reference>
<protein>
    <recommendedName>
        <fullName>Uncharacterized HTH-type transcriptional regulator MG101</fullName>
    </recommendedName>
</protein>
<sequence length="222" mass="25998">MKFGKEIAKKNQIIYRYIILKIQSFEWPANTRIFSERQLEIRFNSSRSQIRSVLATLLNKNIIRYTKNTPGYFVCKDVGFSFFHKTQDNLKVKYAKLSTLIKKLLSQDDASVFANIDSTVHLDKFKGIEAKFFDENKKHFLNVCFFAKDDILNILDENNLQQQFFREFAYNGIAIEKRHCVTSVDKESGCLVMYDMYYDDNDNFVVASKSNFLNPELKVINA</sequence>
<organism>
    <name type="scientific">Mycoplasma genitalium (strain ATCC 33530 / DSM 19775 / NCTC 10195 / G37)</name>
    <name type="common">Mycoplasmoides genitalium</name>
    <dbReference type="NCBI Taxonomy" id="243273"/>
    <lineage>
        <taxon>Bacteria</taxon>
        <taxon>Bacillati</taxon>
        <taxon>Mycoplasmatota</taxon>
        <taxon>Mycoplasmoidales</taxon>
        <taxon>Mycoplasmoidaceae</taxon>
        <taxon>Mycoplasmoides</taxon>
    </lineage>
</organism>
<accession>P47347</accession>
<accession>Q49244</accession>
<keyword id="KW-0238">DNA-binding</keyword>
<keyword id="KW-1185">Reference proteome</keyword>
<keyword id="KW-0804">Transcription</keyword>
<keyword id="KW-0805">Transcription regulation</keyword>
<feature type="chain" id="PRO_0000050693" description="Uncharacterized HTH-type transcriptional regulator MG101">
    <location>
        <begin position="1"/>
        <end position="222"/>
    </location>
</feature>
<feature type="domain" description="HTH gntR-type" evidence="1">
    <location>
        <begin position="8"/>
        <end position="77"/>
    </location>
</feature>
<feature type="sequence conflict" description="In Ref. 2." evidence="2" ref="2">
    <original>WPANTRIFSERQLEIRFNSSRS</original>
    <variation>HPYLLRTPTRNPFQLLTD</variation>
    <location>
        <begin position="27"/>
        <end position="48"/>
    </location>
</feature>
<gene>
    <name type="ordered locus">MG101</name>
</gene>
<evidence type="ECO:0000255" key="1">
    <source>
        <dbReference type="PROSITE-ProRule" id="PRU00307"/>
    </source>
</evidence>
<evidence type="ECO:0000305" key="2"/>
<dbReference type="EMBL" id="L43967">
    <property type="protein sequence ID" value="AAC71319.1"/>
    <property type="molecule type" value="Genomic_DNA"/>
</dbReference>
<dbReference type="EMBL" id="U02103">
    <property type="protein sequence ID" value="AAD12375.1"/>
    <property type="molecule type" value="Genomic_DNA"/>
</dbReference>
<dbReference type="PIR" id="B64211">
    <property type="entry name" value="B64211"/>
</dbReference>
<dbReference type="RefSeq" id="WP_009885659.1">
    <property type="nucleotide sequence ID" value="NC_000908.2"/>
</dbReference>
<dbReference type="SMR" id="P47347"/>
<dbReference type="STRING" id="243273.MG_101"/>
<dbReference type="GeneID" id="88282224"/>
<dbReference type="KEGG" id="mge:MG_101"/>
<dbReference type="eggNOG" id="COG2186">
    <property type="taxonomic scope" value="Bacteria"/>
</dbReference>
<dbReference type="HOGENOM" id="CLU_1081049_0_0_14"/>
<dbReference type="InParanoid" id="P47347"/>
<dbReference type="OrthoDB" id="397811at2"/>
<dbReference type="BioCyc" id="MGEN243273:G1GJ2-113-MONOMER"/>
<dbReference type="Proteomes" id="UP000000807">
    <property type="component" value="Chromosome"/>
</dbReference>
<dbReference type="GO" id="GO:0003677">
    <property type="term" value="F:DNA binding"/>
    <property type="evidence" value="ECO:0007669"/>
    <property type="project" value="UniProtKB-KW"/>
</dbReference>
<dbReference type="GO" id="GO:0003700">
    <property type="term" value="F:DNA-binding transcription factor activity"/>
    <property type="evidence" value="ECO:0007669"/>
    <property type="project" value="InterPro"/>
</dbReference>
<dbReference type="Gene3D" id="1.10.10.10">
    <property type="entry name" value="Winged helix-like DNA-binding domain superfamily/Winged helix DNA-binding domain"/>
    <property type="match status" value="1"/>
</dbReference>
<dbReference type="InterPro" id="IPR000524">
    <property type="entry name" value="Tscrpt_reg_HTH_GntR"/>
</dbReference>
<dbReference type="InterPro" id="IPR036388">
    <property type="entry name" value="WH-like_DNA-bd_sf"/>
</dbReference>
<dbReference type="InterPro" id="IPR036390">
    <property type="entry name" value="WH_DNA-bd_sf"/>
</dbReference>
<dbReference type="SUPFAM" id="SSF46785">
    <property type="entry name" value="Winged helix' DNA-binding domain"/>
    <property type="match status" value="1"/>
</dbReference>
<dbReference type="PROSITE" id="PS50949">
    <property type="entry name" value="HTH_GNTR"/>
    <property type="match status" value="1"/>
</dbReference>
<proteinExistence type="predicted"/>